<accession>Q8R6G8</accession>
<comment type="function">
    <text evidence="1">Catalyzes the formation of N(7)-methylguanine at position 46 (m7G46) in tRNA.</text>
</comment>
<comment type="catalytic activity">
    <reaction>
        <text>guanosine(46) in tRNA + S-adenosyl-L-methionine = N(7)-methylguanosine(46) in tRNA + S-adenosyl-L-homocysteine</text>
        <dbReference type="Rhea" id="RHEA:42708"/>
        <dbReference type="Rhea" id="RHEA-COMP:10188"/>
        <dbReference type="Rhea" id="RHEA-COMP:10189"/>
        <dbReference type="ChEBI" id="CHEBI:57856"/>
        <dbReference type="ChEBI" id="CHEBI:59789"/>
        <dbReference type="ChEBI" id="CHEBI:74269"/>
        <dbReference type="ChEBI" id="CHEBI:74480"/>
        <dbReference type="EC" id="2.1.1.33"/>
    </reaction>
</comment>
<comment type="similarity">
    <text evidence="2">In the C-terminal section; belongs to the class I-like SAM-binding methyltransferase superfamily. TrmB family.</text>
</comment>
<comment type="similarity">
    <text evidence="2">In the N-terminal section; belongs to the glycosyltransferase 1 family.</text>
</comment>
<proteinExistence type="inferred from homology"/>
<evidence type="ECO:0000250" key="1"/>
<evidence type="ECO:0000305" key="2"/>
<dbReference type="EC" id="2.-.-.-"/>
<dbReference type="EC" id="2.1.1.33"/>
<dbReference type="EMBL" id="AE009951">
    <property type="protein sequence ID" value="AAL93721.1"/>
    <property type="molecule type" value="Genomic_DNA"/>
</dbReference>
<dbReference type="RefSeq" id="NP_602422.1">
    <property type="nucleotide sequence ID" value="NC_003454.1"/>
</dbReference>
<dbReference type="RefSeq" id="WP_011015702.1">
    <property type="nucleotide sequence ID" value="NZ_CP028101.1"/>
</dbReference>
<dbReference type="SMR" id="Q8R6G8"/>
<dbReference type="STRING" id="190304.FN1606"/>
<dbReference type="CAZy" id="GT30">
    <property type="family name" value="Glycosyltransferase Family 30"/>
</dbReference>
<dbReference type="PaxDb" id="190304-FN1606"/>
<dbReference type="EnsemblBacteria" id="AAL93721">
    <property type="protein sequence ID" value="AAL93721"/>
    <property type="gene ID" value="FN1606"/>
</dbReference>
<dbReference type="GeneID" id="79782545"/>
<dbReference type="KEGG" id="fnu:FN1606"/>
<dbReference type="PATRIC" id="fig|190304.8.peg.98"/>
<dbReference type="eggNOG" id="COG0220">
    <property type="taxonomic scope" value="Bacteria"/>
</dbReference>
<dbReference type="eggNOG" id="COG1519">
    <property type="taxonomic scope" value="Bacteria"/>
</dbReference>
<dbReference type="HOGENOM" id="CLU_427447_0_0_0"/>
<dbReference type="InParanoid" id="Q8R6G8"/>
<dbReference type="BioCyc" id="FNUC190304:G1FZS-109-MONOMER"/>
<dbReference type="Proteomes" id="UP000002521">
    <property type="component" value="Chromosome"/>
</dbReference>
<dbReference type="GO" id="GO:0043527">
    <property type="term" value="C:tRNA methyltransferase complex"/>
    <property type="evidence" value="ECO:0000318"/>
    <property type="project" value="GO_Central"/>
</dbReference>
<dbReference type="GO" id="GO:0008176">
    <property type="term" value="F:tRNA (guanine(46)-N7)-methyltransferase activity"/>
    <property type="evidence" value="ECO:0000318"/>
    <property type="project" value="GO_Central"/>
</dbReference>
<dbReference type="GO" id="GO:0036265">
    <property type="term" value="P:RNA (guanine-N7)-methylation"/>
    <property type="evidence" value="ECO:0000318"/>
    <property type="project" value="GO_Central"/>
</dbReference>
<dbReference type="GO" id="GO:0030488">
    <property type="term" value="P:tRNA methylation"/>
    <property type="evidence" value="ECO:0000318"/>
    <property type="project" value="GO_Central"/>
</dbReference>
<dbReference type="CDD" id="cd02440">
    <property type="entry name" value="AdoMet_MTases"/>
    <property type="match status" value="1"/>
</dbReference>
<dbReference type="FunFam" id="3.40.50.11720:FF:000001">
    <property type="entry name" value="3-deoxy-D-manno-octulosonic acid transferase"/>
    <property type="match status" value="1"/>
</dbReference>
<dbReference type="FunFam" id="3.40.50.2000:FF:000432">
    <property type="entry name" value="3-deoxy-D-manno-octulosonic acid transferase"/>
    <property type="match status" value="1"/>
</dbReference>
<dbReference type="Gene3D" id="3.40.50.11720">
    <property type="entry name" value="3-Deoxy-D-manno-octulosonic-acid transferase, N-terminal domain"/>
    <property type="match status" value="1"/>
</dbReference>
<dbReference type="Gene3D" id="3.40.50.2000">
    <property type="entry name" value="Glycogen Phosphorylase B"/>
    <property type="match status" value="1"/>
</dbReference>
<dbReference type="Gene3D" id="3.40.50.150">
    <property type="entry name" value="Vaccinia Virus protein VP39"/>
    <property type="match status" value="1"/>
</dbReference>
<dbReference type="HAMAP" id="MF_01057">
    <property type="entry name" value="tRNA_methyltr_TrmB"/>
    <property type="match status" value="1"/>
</dbReference>
<dbReference type="InterPro" id="IPR007507">
    <property type="entry name" value="Glycos_transf_N"/>
</dbReference>
<dbReference type="InterPro" id="IPR038107">
    <property type="entry name" value="Glycos_transf_N_sf"/>
</dbReference>
<dbReference type="InterPro" id="IPR039901">
    <property type="entry name" value="Kdotransferase"/>
</dbReference>
<dbReference type="InterPro" id="IPR029063">
    <property type="entry name" value="SAM-dependent_MTases_sf"/>
</dbReference>
<dbReference type="InterPro" id="IPR003358">
    <property type="entry name" value="tRNA_(Gua-N-7)_MeTrfase_Trmb"/>
</dbReference>
<dbReference type="InterPro" id="IPR055361">
    <property type="entry name" value="tRNA_methyltr_TrmB_bact"/>
</dbReference>
<dbReference type="NCBIfam" id="NF001080">
    <property type="entry name" value="PRK00121.2-2"/>
    <property type="match status" value="1"/>
</dbReference>
<dbReference type="NCBIfam" id="TIGR00091">
    <property type="entry name" value="tRNA (guanosine(46)-N7)-methyltransferase TrmB"/>
    <property type="match status" value="1"/>
</dbReference>
<dbReference type="PANTHER" id="PTHR42755:SF1">
    <property type="entry name" value="3-DEOXY-D-MANNO-OCTULOSONIC ACID TRANSFERASE, MITOCHONDRIAL-RELATED"/>
    <property type="match status" value="1"/>
</dbReference>
<dbReference type="PANTHER" id="PTHR42755">
    <property type="entry name" value="3-DEOXY-MANNO-OCTULOSONATE CYTIDYLYLTRANSFERASE"/>
    <property type="match status" value="1"/>
</dbReference>
<dbReference type="Pfam" id="PF04413">
    <property type="entry name" value="Glycos_transf_N"/>
    <property type="match status" value="1"/>
</dbReference>
<dbReference type="Pfam" id="PF02390">
    <property type="entry name" value="Methyltransf_4"/>
    <property type="match status" value="1"/>
</dbReference>
<dbReference type="SUPFAM" id="SSF53335">
    <property type="entry name" value="S-adenosyl-L-methionine-dependent methyltransferases"/>
    <property type="match status" value="1"/>
</dbReference>
<dbReference type="SUPFAM" id="SSF53756">
    <property type="entry name" value="UDP-Glycosyltransferase/glycogen phosphorylase"/>
    <property type="match status" value="1"/>
</dbReference>
<dbReference type="PROSITE" id="PS51625">
    <property type="entry name" value="SAM_MT_TRMB"/>
    <property type="match status" value="1"/>
</dbReference>
<gene>
    <name type="primary">trmB</name>
    <name type="ordered locus">FN1606</name>
</gene>
<sequence length="640" mass="75760">MYNLLRKIALTLYRPFMKEKMKTFINKRLSQDFSDLKDEEYIWIHCSSVGEVNLSEDLVKKFYSISRKNILISVFTDTGYENAVKKYSDKKKIKVIYFPVDDKKKINEILNKIKLKLLVLVETELWPNLINEVNEKNSRIIVVNGRISDRSYPRYKKLKFLLKSMLQKIAFFYMQSEIDKERIVSLGAIKEKVENVGNLKFSISLEKYSDIEKKEYRKFLNIGDRKVFVAGSTRTGEDEIILDVFKRLKNYVLIIVPRHLDRLPKIENLIKENNLTYVKYSDLENNTSTGKENIILVDKMGVLRKLYSISDIAFVGGTLVNIGGHNLLEPLFYRKTVIFGKYTQNVVDIAKEILRRKIGFQVENVEEFVKAIETIENEKNSDEEINSFFEENRLIALNIVKKENLIMNNIKEEAKDLWKHFFHSEKSNYNMYMYKLLDYPEYIMYDNDVMKEKKSKWSEYFGNSDQIAVEIGTGSGNFIYQLAERNPNKNFIGLELRFKRLVLAAQKCKKRNIKNVAFLRKRGEELEDFLANNEISEMYINFPDPWEGTEKNRIIQERLFKTLDKIMKKDGMLYFKTDHDVYYNDVLELVKTLDNYEVIYHTSDLHNSEKAENNIKTEFEQLFLHKHNKNINYIEIKKIV</sequence>
<keyword id="KW-0489">Methyltransferase</keyword>
<keyword id="KW-1185">Reference proteome</keyword>
<keyword id="KW-0949">S-adenosyl-L-methionine</keyword>
<keyword id="KW-0808">Transferase</keyword>
<keyword id="KW-0819">tRNA processing</keyword>
<name>TRMB_FUSNN</name>
<organism>
    <name type="scientific">Fusobacterium nucleatum subsp. nucleatum (strain ATCC 25586 / DSM 15643 / BCRC 10681 / CIP 101130 / JCM 8532 / KCTC 2640 / LMG 13131 / VPI 4355)</name>
    <dbReference type="NCBI Taxonomy" id="190304"/>
    <lineage>
        <taxon>Bacteria</taxon>
        <taxon>Fusobacteriati</taxon>
        <taxon>Fusobacteriota</taxon>
        <taxon>Fusobacteriia</taxon>
        <taxon>Fusobacteriales</taxon>
        <taxon>Fusobacteriaceae</taxon>
        <taxon>Fusobacterium</taxon>
    </lineage>
</organism>
<reference key="1">
    <citation type="journal article" date="2002" name="J. Bacteriol.">
        <title>Genome sequence and analysis of the oral bacterium Fusobacterium nucleatum strain ATCC 25586.</title>
        <authorList>
            <person name="Kapatral V."/>
            <person name="Anderson I."/>
            <person name="Ivanova N."/>
            <person name="Reznik G."/>
            <person name="Los T."/>
            <person name="Lykidis A."/>
            <person name="Bhattacharyya A."/>
            <person name="Bartman A."/>
            <person name="Gardner W."/>
            <person name="Grechkin G."/>
            <person name="Zhu L."/>
            <person name="Vasieva O."/>
            <person name="Chu L."/>
            <person name="Kogan Y."/>
            <person name="Chaga O."/>
            <person name="Goltsman E."/>
            <person name="Bernal A."/>
            <person name="Larsen N."/>
            <person name="D'Souza M."/>
            <person name="Walunas T."/>
            <person name="Pusch G."/>
            <person name="Haselkorn R."/>
            <person name="Fonstein M."/>
            <person name="Kyrpides N.C."/>
            <person name="Overbeek R."/>
        </authorList>
    </citation>
    <scope>NUCLEOTIDE SEQUENCE [LARGE SCALE GENOMIC DNA]</scope>
    <source>
        <strain>ATCC 25586 / DSM 15643 / BCRC 10681 / CIP 101130 / JCM 8532 / KCTC 2640 / LMG 13131 / VPI 4355</strain>
    </source>
</reference>
<feature type="chain" id="PRO_0000171430" description="Bifunctional glycosyltransferase/methyltransferase">
    <location>
        <begin position="1"/>
        <end position="640"/>
    </location>
</feature>
<feature type="region of interest" description="Glycosyltransferase">
    <location>
        <begin position="1"/>
        <end position="438"/>
    </location>
</feature>
<feature type="region of interest" description="tRNA (guanine-N(7)-)-methyltransferase">
    <location>
        <begin position="439"/>
        <end position="640"/>
    </location>
</feature>
<feature type="active site" evidence="1">
    <location>
        <position position="544"/>
    </location>
</feature>
<feature type="binding site" evidence="1">
    <location>
        <position position="470"/>
    </location>
    <ligand>
        <name>S-adenosyl-L-methionine</name>
        <dbReference type="ChEBI" id="CHEBI:59789"/>
    </ligand>
</feature>
<feature type="binding site" evidence="1">
    <location>
        <position position="495"/>
    </location>
    <ligand>
        <name>S-adenosyl-L-methionine</name>
        <dbReference type="ChEBI" id="CHEBI:59789"/>
    </ligand>
</feature>
<feature type="binding site" evidence="1">
    <location>
        <position position="544"/>
    </location>
    <ligand>
        <name>S-adenosyl-L-methionine</name>
        <dbReference type="ChEBI" id="CHEBI:59789"/>
    </ligand>
</feature>
<feature type="binding site" evidence="1">
    <location>
        <position position="578"/>
    </location>
    <ligand>
        <name>substrate</name>
    </ligand>
</feature>
<feature type="binding site" evidence="1">
    <location>
        <begin position="617"/>
        <end position="620"/>
    </location>
    <ligand>
        <name>substrate</name>
    </ligand>
</feature>
<protein>
    <recommendedName>
        <fullName>Bifunctional glycosyltransferase/methyltransferase</fullName>
    </recommendedName>
    <domain>
        <recommendedName>
            <fullName>KdtA protein homolog</fullName>
            <ecNumber>2.-.-.-</ecNumber>
        </recommendedName>
    </domain>
    <domain>
        <recommendedName>
            <fullName>tRNA (guanine-N(7)-)-methyltransferase</fullName>
            <ecNumber>2.1.1.33</ecNumber>
        </recommendedName>
        <alternativeName>
            <fullName>tRNA (guanine(46)-N(7))-methyltransferase</fullName>
        </alternativeName>
        <alternativeName>
            <fullName>tRNA(m7G46)-methyltransferase</fullName>
        </alternativeName>
    </domain>
</protein>